<protein>
    <recommendedName>
        <fullName evidence="1">Glutamine--tRNA ligase</fullName>
        <ecNumber evidence="1">6.1.1.18</ecNumber>
    </recommendedName>
    <alternativeName>
        <fullName evidence="1">Glutaminyl-tRNA synthetase</fullName>
        <shortName evidence="1">GlnRS</shortName>
    </alternativeName>
</protein>
<dbReference type="EC" id="6.1.1.18" evidence="1"/>
<dbReference type="EMBL" id="CP000886">
    <property type="protein sequence ID" value="ABX68228.1"/>
    <property type="molecule type" value="Genomic_DNA"/>
</dbReference>
<dbReference type="RefSeq" id="WP_001287178.1">
    <property type="nucleotide sequence ID" value="NC_010102.1"/>
</dbReference>
<dbReference type="SMR" id="A9MUG5"/>
<dbReference type="KEGG" id="spq:SPAB_02856"/>
<dbReference type="PATRIC" id="fig|1016998.12.peg.2701"/>
<dbReference type="HOGENOM" id="CLU_001882_2_3_6"/>
<dbReference type="BioCyc" id="SENT1016998:SPAB_RS11630-MONOMER"/>
<dbReference type="Proteomes" id="UP000008556">
    <property type="component" value="Chromosome"/>
</dbReference>
<dbReference type="GO" id="GO:0005829">
    <property type="term" value="C:cytosol"/>
    <property type="evidence" value="ECO:0007669"/>
    <property type="project" value="TreeGrafter"/>
</dbReference>
<dbReference type="GO" id="GO:0005524">
    <property type="term" value="F:ATP binding"/>
    <property type="evidence" value="ECO:0007669"/>
    <property type="project" value="UniProtKB-UniRule"/>
</dbReference>
<dbReference type="GO" id="GO:0004819">
    <property type="term" value="F:glutamine-tRNA ligase activity"/>
    <property type="evidence" value="ECO:0007669"/>
    <property type="project" value="UniProtKB-UniRule"/>
</dbReference>
<dbReference type="GO" id="GO:0006425">
    <property type="term" value="P:glutaminyl-tRNA aminoacylation"/>
    <property type="evidence" value="ECO:0007669"/>
    <property type="project" value="InterPro"/>
</dbReference>
<dbReference type="GO" id="GO:0006424">
    <property type="term" value="P:glutamyl-tRNA aminoacylation"/>
    <property type="evidence" value="ECO:0007669"/>
    <property type="project" value="UniProtKB-UniRule"/>
</dbReference>
<dbReference type="CDD" id="cd00807">
    <property type="entry name" value="GlnRS_core"/>
    <property type="match status" value="1"/>
</dbReference>
<dbReference type="FunFam" id="1.10.1160.10:FF:000001">
    <property type="entry name" value="Glutamine--tRNA ligase"/>
    <property type="match status" value="1"/>
</dbReference>
<dbReference type="FunFam" id="2.40.240.10:FF:000001">
    <property type="entry name" value="Glutamine--tRNA ligase"/>
    <property type="match status" value="1"/>
</dbReference>
<dbReference type="FunFam" id="2.40.240.10:FF:000003">
    <property type="entry name" value="Glutamine--tRNA ligase"/>
    <property type="match status" value="1"/>
</dbReference>
<dbReference type="FunFam" id="3.90.800.10:FF:000001">
    <property type="entry name" value="Glutamine--tRNA ligase"/>
    <property type="match status" value="1"/>
</dbReference>
<dbReference type="FunFam" id="3.40.50.620:FF:000037">
    <property type="entry name" value="Glutamine--tRNA ligase cytoplasmic"/>
    <property type="match status" value="1"/>
</dbReference>
<dbReference type="Gene3D" id="1.10.1160.10">
    <property type="entry name" value="Glutamyl-trna Synthetase, Domain 2"/>
    <property type="match status" value="1"/>
</dbReference>
<dbReference type="Gene3D" id="3.90.800.10">
    <property type="entry name" value="Glutamyl-tRNA Synthetase, Domain 3"/>
    <property type="match status" value="1"/>
</dbReference>
<dbReference type="Gene3D" id="3.40.50.620">
    <property type="entry name" value="HUPs"/>
    <property type="match status" value="1"/>
</dbReference>
<dbReference type="Gene3D" id="2.40.240.10">
    <property type="entry name" value="Ribosomal Protein L25, Chain P"/>
    <property type="match status" value="2"/>
</dbReference>
<dbReference type="HAMAP" id="MF_00126">
    <property type="entry name" value="Gln_tRNA_synth"/>
    <property type="match status" value="1"/>
</dbReference>
<dbReference type="InterPro" id="IPR001412">
    <property type="entry name" value="aa-tRNA-synth_I_CS"/>
</dbReference>
<dbReference type="InterPro" id="IPR004514">
    <property type="entry name" value="Gln-tRNA-synth"/>
</dbReference>
<dbReference type="InterPro" id="IPR050132">
    <property type="entry name" value="Gln/Glu-tRNA_Ligase"/>
</dbReference>
<dbReference type="InterPro" id="IPR022861">
    <property type="entry name" value="Gln_tRNA_ligase_bac"/>
</dbReference>
<dbReference type="InterPro" id="IPR000924">
    <property type="entry name" value="Glu/Gln-tRNA-synth"/>
</dbReference>
<dbReference type="InterPro" id="IPR020058">
    <property type="entry name" value="Glu/Gln-tRNA-synth_Ib_cat-dom"/>
</dbReference>
<dbReference type="InterPro" id="IPR020059">
    <property type="entry name" value="Glu/Gln-tRNA-synth_Ib_codon-bd"/>
</dbReference>
<dbReference type="InterPro" id="IPR020061">
    <property type="entry name" value="Glu_tRNA_lig_a-bdl"/>
</dbReference>
<dbReference type="InterPro" id="IPR020056">
    <property type="entry name" value="Rbsml_bL25/Gln-tRNA_synth_N"/>
</dbReference>
<dbReference type="InterPro" id="IPR011035">
    <property type="entry name" value="Ribosomal_bL25/Gln-tRNA_synth"/>
</dbReference>
<dbReference type="InterPro" id="IPR014729">
    <property type="entry name" value="Rossmann-like_a/b/a_fold"/>
</dbReference>
<dbReference type="InterPro" id="IPR049437">
    <property type="entry name" value="tRNA-synt_1c_C2"/>
</dbReference>
<dbReference type="NCBIfam" id="TIGR00440">
    <property type="entry name" value="glnS"/>
    <property type="match status" value="1"/>
</dbReference>
<dbReference type="NCBIfam" id="NF011291">
    <property type="entry name" value="PRK14703.1"/>
    <property type="match status" value="1"/>
</dbReference>
<dbReference type="PANTHER" id="PTHR43097:SF5">
    <property type="entry name" value="GLUTAMATE--TRNA LIGASE"/>
    <property type="match status" value="1"/>
</dbReference>
<dbReference type="PANTHER" id="PTHR43097">
    <property type="entry name" value="GLUTAMINE-TRNA LIGASE"/>
    <property type="match status" value="1"/>
</dbReference>
<dbReference type="Pfam" id="PF00749">
    <property type="entry name" value="tRNA-synt_1c"/>
    <property type="match status" value="1"/>
</dbReference>
<dbReference type="Pfam" id="PF03950">
    <property type="entry name" value="tRNA-synt_1c_C"/>
    <property type="match status" value="1"/>
</dbReference>
<dbReference type="Pfam" id="PF20974">
    <property type="entry name" value="tRNA-synt_1c_C2"/>
    <property type="match status" value="1"/>
</dbReference>
<dbReference type="PRINTS" id="PR00987">
    <property type="entry name" value="TRNASYNTHGLU"/>
</dbReference>
<dbReference type="SUPFAM" id="SSF52374">
    <property type="entry name" value="Nucleotidylyl transferase"/>
    <property type="match status" value="1"/>
</dbReference>
<dbReference type="SUPFAM" id="SSF50715">
    <property type="entry name" value="Ribosomal protein L25-like"/>
    <property type="match status" value="1"/>
</dbReference>
<dbReference type="PROSITE" id="PS00178">
    <property type="entry name" value="AA_TRNA_LIGASE_I"/>
    <property type="match status" value="1"/>
</dbReference>
<gene>
    <name evidence="1" type="primary">glnS</name>
    <name type="ordered locus">SPAB_02856</name>
</gene>
<keyword id="KW-0030">Aminoacyl-tRNA synthetase</keyword>
<keyword id="KW-0067">ATP-binding</keyword>
<keyword id="KW-0963">Cytoplasm</keyword>
<keyword id="KW-0436">Ligase</keyword>
<keyword id="KW-0547">Nucleotide-binding</keyword>
<keyword id="KW-0648">Protein biosynthesis</keyword>
<reference key="1">
    <citation type="submission" date="2007-11" db="EMBL/GenBank/DDBJ databases">
        <authorList>
            <consortium name="The Salmonella enterica serovar Paratyphi B Genome Sequencing Project"/>
            <person name="McClelland M."/>
            <person name="Sanderson E.K."/>
            <person name="Porwollik S."/>
            <person name="Spieth J."/>
            <person name="Clifton W.S."/>
            <person name="Fulton R."/>
            <person name="Cordes M."/>
            <person name="Wollam A."/>
            <person name="Shah N."/>
            <person name="Pepin K."/>
            <person name="Bhonagiri V."/>
            <person name="Nash W."/>
            <person name="Johnson M."/>
            <person name="Thiruvilangam P."/>
            <person name="Wilson R."/>
        </authorList>
    </citation>
    <scope>NUCLEOTIDE SEQUENCE [LARGE SCALE GENOMIC DNA]</scope>
    <source>
        <strain>ATCC BAA-1250 / SPB7</strain>
    </source>
</reference>
<accession>A9MUG5</accession>
<feature type="chain" id="PRO_1000076256" description="Glutamine--tRNA ligase">
    <location>
        <begin position="1"/>
        <end position="555"/>
    </location>
</feature>
<feature type="region of interest" description="Interaction with tRNA" evidence="1">
    <location>
        <begin position="317"/>
        <end position="324"/>
    </location>
</feature>
<feature type="short sequence motif" description="'HIGH' region" evidence="1">
    <location>
        <begin position="34"/>
        <end position="44"/>
    </location>
</feature>
<feature type="short sequence motif" description="'KMSKS' region" evidence="1">
    <location>
        <begin position="268"/>
        <end position="272"/>
    </location>
</feature>
<feature type="binding site" evidence="1">
    <location>
        <begin position="35"/>
        <end position="37"/>
    </location>
    <ligand>
        <name>ATP</name>
        <dbReference type="ChEBI" id="CHEBI:30616"/>
    </ligand>
</feature>
<feature type="binding site" evidence="1">
    <location>
        <begin position="41"/>
        <end position="47"/>
    </location>
    <ligand>
        <name>ATP</name>
        <dbReference type="ChEBI" id="CHEBI:30616"/>
    </ligand>
</feature>
<feature type="binding site" evidence="1">
    <location>
        <position position="67"/>
    </location>
    <ligand>
        <name>L-glutamine</name>
        <dbReference type="ChEBI" id="CHEBI:58359"/>
    </ligand>
</feature>
<feature type="binding site" evidence="1">
    <location>
        <position position="212"/>
    </location>
    <ligand>
        <name>L-glutamine</name>
        <dbReference type="ChEBI" id="CHEBI:58359"/>
    </ligand>
</feature>
<feature type="binding site" evidence="1">
    <location>
        <position position="231"/>
    </location>
    <ligand>
        <name>ATP</name>
        <dbReference type="ChEBI" id="CHEBI:30616"/>
    </ligand>
</feature>
<feature type="binding site" evidence="1">
    <location>
        <begin position="261"/>
        <end position="262"/>
    </location>
    <ligand>
        <name>ATP</name>
        <dbReference type="ChEBI" id="CHEBI:30616"/>
    </ligand>
</feature>
<feature type="binding site" evidence="1">
    <location>
        <begin position="269"/>
        <end position="271"/>
    </location>
    <ligand>
        <name>ATP</name>
        <dbReference type="ChEBI" id="CHEBI:30616"/>
    </ligand>
</feature>
<proteinExistence type="inferred from homology"/>
<comment type="catalytic activity">
    <reaction evidence="1">
        <text>tRNA(Gln) + L-glutamine + ATP = L-glutaminyl-tRNA(Gln) + AMP + diphosphate</text>
        <dbReference type="Rhea" id="RHEA:20121"/>
        <dbReference type="Rhea" id="RHEA-COMP:9662"/>
        <dbReference type="Rhea" id="RHEA-COMP:9681"/>
        <dbReference type="ChEBI" id="CHEBI:30616"/>
        <dbReference type="ChEBI" id="CHEBI:33019"/>
        <dbReference type="ChEBI" id="CHEBI:58359"/>
        <dbReference type="ChEBI" id="CHEBI:78442"/>
        <dbReference type="ChEBI" id="CHEBI:78521"/>
        <dbReference type="ChEBI" id="CHEBI:456215"/>
        <dbReference type="EC" id="6.1.1.18"/>
    </reaction>
</comment>
<comment type="subunit">
    <text evidence="1">Monomer.</text>
</comment>
<comment type="subcellular location">
    <subcellularLocation>
        <location evidence="1">Cytoplasm</location>
    </subcellularLocation>
</comment>
<comment type="similarity">
    <text evidence="1">Belongs to the class-I aminoacyl-tRNA synthetase family.</text>
</comment>
<evidence type="ECO:0000255" key="1">
    <source>
        <dbReference type="HAMAP-Rule" id="MF_00126"/>
    </source>
</evidence>
<name>SYQ_SALPB</name>
<organism>
    <name type="scientific">Salmonella paratyphi B (strain ATCC BAA-1250 / SPB7)</name>
    <dbReference type="NCBI Taxonomy" id="1016998"/>
    <lineage>
        <taxon>Bacteria</taxon>
        <taxon>Pseudomonadati</taxon>
        <taxon>Pseudomonadota</taxon>
        <taxon>Gammaproteobacteria</taxon>
        <taxon>Enterobacterales</taxon>
        <taxon>Enterobacteriaceae</taxon>
        <taxon>Salmonella</taxon>
    </lineage>
</organism>
<sequence length="555" mass="63554">MSEAEARPTNFIRQIIDEDLASGKHTTVHTRFPPEPNGYLHIGHAKSICLNFGIAQDYQGQCNLRFDDTNPVKEDIEYVDSIKNDVEWLGFHWSGDIRYSSDYFDQLHAYAVELINKGLAYVDELTPEQIREYRGTLTAPGKNSPFRDRSVEENLALFEKMRTGGFEEGKACLRAKIDMASPFIVMRDPVLYRIKFAEHHQTGNKWCIYPMYDFTHCISDALEGITHSLCTLEFQDNRRLYDWVLDNITIPVHPRQYEFSRLNLEYTVMSKRKLNLLVTDKHVEGWDDPRMPTISGLRRRGYTAASIREFCKRIGVTKQDNTIEMASLESCIREDLNENAPRAMAVIDPVKLVIENYPQGESEMVTMPNHPNKLEMGSREVPFSGEIWIDRADFREEANKQYKRLVMGKEVRLRNAYVIKAERVEKDAEGNITTIFCTYDADTLSKDPADGRKVKGVIHWVSAAHALPIEIRLYDRLFSVPNPGAAEDFLSVINPESLVIKQGYGEPSLKAAVAGKAFQFEREGYFCLDSRYATADKLVFNRTVGLRDTWAKAGE</sequence>